<name>BDBC2_BACAN</name>
<sequence length="140" mass="16023">MTIIRKYHIAIAWTIATSAMLISLIFSEWMKLPPCDLCWYQRMAMYPLVLILGIGMYRKDSNVSIYAFPFACIGLIISVYQITIQAFPTSEMKICSVGVSCTENYLNLFGFISIPMLSFVGFLAIIILLYINQIKRQKNK</sequence>
<dbReference type="EMBL" id="AF065404">
    <property type="protein sequence ID" value="AAD32443.1"/>
    <property type="status" value="ALT_INIT"/>
    <property type="molecule type" value="Genomic_DNA"/>
</dbReference>
<dbReference type="EMBL" id="AE011190">
    <property type="protein sequence ID" value="AAM26150.1"/>
    <property type="molecule type" value="Genomic_DNA"/>
</dbReference>
<dbReference type="EMBL" id="AE017336">
    <property type="protein sequence ID" value="AAT35497.1"/>
    <property type="molecule type" value="Genomic_DNA"/>
</dbReference>
<dbReference type="PIR" id="B59108">
    <property type="entry name" value="B59108"/>
</dbReference>
<dbReference type="RefSeq" id="NP_052834.1">
    <property type="nucleotide sequence ID" value="NC_001496.1"/>
</dbReference>
<dbReference type="SMR" id="Q8KYH8"/>
<dbReference type="KEGG" id="banh:HYU01_28965"/>
<dbReference type="KEGG" id="bar:GBAA_pXO1_0208"/>
<dbReference type="HOGENOM" id="CLU_128688_0_0_9"/>
<dbReference type="OMA" id="WVNYFGF"/>
<dbReference type="Proteomes" id="UP000000594">
    <property type="component" value="Plasmid pXO1"/>
</dbReference>
<dbReference type="GO" id="GO:0005886">
    <property type="term" value="C:plasma membrane"/>
    <property type="evidence" value="ECO:0007669"/>
    <property type="project" value="UniProtKB-SubCell"/>
</dbReference>
<dbReference type="GO" id="GO:0015035">
    <property type="term" value="F:protein-disulfide reductase activity"/>
    <property type="evidence" value="ECO:0007669"/>
    <property type="project" value="UniProtKB-UniRule"/>
</dbReference>
<dbReference type="GO" id="GO:0006457">
    <property type="term" value="P:protein folding"/>
    <property type="evidence" value="ECO:0007669"/>
    <property type="project" value="InterPro"/>
</dbReference>
<dbReference type="Gene3D" id="1.20.1550.10">
    <property type="entry name" value="DsbB-like"/>
    <property type="match status" value="1"/>
</dbReference>
<dbReference type="HAMAP" id="MF_00287">
    <property type="entry name" value="BdbC"/>
    <property type="match status" value="1"/>
</dbReference>
<dbReference type="InterPro" id="IPR003752">
    <property type="entry name" value="DiS_bond_form_DsbB/BdbC"/>
</dbReference>
<dbReference type="InterPro" id="IPR012187">
    <property type="entry name" value="Disulphide_bond_form_BdbC"/>
</dbReference>
<dbReference type="InterPro" id="IPR023380">
    <property type="entry name" value="DsbB-like_sf"/>
</dbReference>
<dbReference type="NCBIfam" id="NF002849">
    <property type="entry name" value="PRK03113.1"/>
    <property type="match status" value="1"/>
</dbReference>
<dbReference type="PANTHER" id="PTHR43469">
    <property type="entry name" value="DISULFIDE FORMATION PROTEIN-RELATED"/>
    <property type="match status" value="1"/>
</dbReference>
<dbReference type="PANTHER" id="PTHR43469:SF1">
    <property type="entry name" value="SPBETA PROPHAGE-DERIVED DISULFIDE BOND FORMATION PROTEIN B"/>
    <property type="match status" value="1"/>
</dbReference>
<dbReference type="Pfam" id="PF02600">
    <property type="entry name" value="DsbB"/>
    <property type="match status" value="1"/>
</dbReference>
<dbReference type="PIRSF" id="PIRSF036659">
    <property type="entry name" value="BdbC"/>
    <property type="match status" value="1"/>
</dbReference>
<dbReference type="SUPFAM" id="SSF158442">
    <property type="entry name" value="DsbB-like"/>
    <property type="match status" value="1"/>
</dbReference>
<reference key="1">
    <citation type="journal article" date="1999" name="J. Bacteriol.">
        <title>Sequence and organization of pXO1, the large Bacillus anthracis plasmid harboring the anthrax toxin genes.</title>
        <authorList>
            <person name="Okinaka R.T."/>
            <person name="Cloud K."/>
            <person name="Hampton O."/>
            <person name="Hoffmaster A.R."/>
            <person name="Hill K.K."/>
            <person name="Keim P."/>
            <person name="Koehler T.M."/>
            <person name="Lamke G."/>
            <person name="Kumano S."/>
            <person name="Mahillon J."/>
            <person name="Manter D."/>
            <person name="Martinez Y."/>
            <person name="Ricke D."/>
            <person name="Svensson R."/>
            <person name="Jackson P.J."/>
        </authorList>
    </citation>
    <scope>NUCLEOTIDE SEQUENCE [LARGE SCALE GENOMIC DNA]</scope>
    <source>
        <strain>Sterne</strain>
    </source>
</reference>
<reference key="2">
    <citation type="journal article" date="2002" name="Science">
        <title>Comparative genome sequencing for discovery of novel polymorphisms in Bacillus anthracis.</title>
        <authorList>
            <person name="Read T.D."/>
            <person name="Salzberg S.L."/>
            <person name="Pop M."/>
            <person name="Shumway M.F."/>
            <person name="Umayam L."/>
            <person name="Jiang L."/>
            <person name="Holtzapple E."/>
            <person name="Busch J.D."/>
            <person name="Smith K.L."/>
            <person name="Schupp J.M."/>
            <person name="Solomon D."/>
            <person name="Keim P."/>
            <person name="Fraser C.M."/>
        </authorList>
    </citation>
    <scope>NUCLEOTIDE SEQUENCE [GENOMIC DNA]</scope>
    <source>
        <strain>Ames / isolate Florida / A2012</strain>
    </source>
</reference>
<reference key="3">
    <citation type="journal article" date="2009" name="J. Bacteriol.">
        <title>The complete genome sequence of Bacillus anthracis Ames 'Ancestor'.</title>
        <authorList>
            <person name="Ravel J."/>
            <person name="Jiang L."/>
            <person name="Stanley S.T."/>
            <person name="Wilson M.R."/>
            <person name="Decker R.S."/>
            <person name="Read T.D."/>
            <person name="Worsham P."/>
            <person name="Keim P.S."/>
            <person name="Salzberg S.L."/>
            <person name="Fraser-Liggett C.M."/>
            <person name="Rasko D.A."/>
        </authorList>
    </citation>
    <scope>NUCLEOTIDE SEQUENCE [LARGE SCALE GENOMIC DNA]</scope>
    <source>
        <strain>Ames ancestor</strain>
    </source>
</reference>
<feature type="chain" id="PRO_0000059371" description="Probable disulfide formation protein C 2">
    <location>
        <begin position="1"/>
        <end position="140"/>
    </location>
</feature>
<feature type="transmembrane region" description="Helical" evidence="2">
    <location>
        <begin position="6"/>
        <end position="25"/>
    </location>
</feature>
<feature type="transmembrane region" description="Helical" evidence="2">
    <location>
        <begin position="40"/>
        <end position="59"/>
    </location>
</feature>
<feature type="transmembrane region" description="Helical" evidence="2">
    <location>
        <begin position="66"/>
        <end position="83"/>
    </location>
</feature>
<feature type="transmembrane region" description="Helical" evidence="2">
    <location>
        <begin position="110"/>
        <end position="134"/>
    </location>
</feature>
<feature type="disulfide bond" description="Redox-active" evidence="1">
    <location>
        <begin position="35"/>
        <end position="38"/>
    </location>
</feature>
<feature type="disulfide bond" description="Redox-active" evidence="1">
    <location>
        <begin position="95"/>
        <end position="101"/>
    </location>
</feature>
<geneLocation type="plasmid">
    <name>pXO1</name>
</geneLocation>
<gene>
    <name type="primary">bdbC2</name>
    <name type="ordered locus">pXO1-139</name>
    <name type="ordered locus">BXA0208</name>
    <name type="ordered locus">GBAA_pXO1_0208</name>
</gene>
<accession>Q8KYH8</accession>
<accession>Q9X395</accession>
<comment type="function">
    <text evidence="1">Required for disulfide bond formation in some proteins.</text>
</comment>
<comment type="subcellular location">
    <subcellularLocation>
        <location evidence="3">Cell membrane</location>
        <topology evidence="3">Multi-pass membrane protein</topology>
    </subcellularLocation>
</comment>
<comment type="similarity">
    <text evidence="3">Belongs to the DsbB family. BdbC subfamily.</text>
</comment>
<comment type="sequence caution" evidence="3">
    <conflict type="erroneous initiation">
        <sequence resource="EMBL-CDS" id="AAD32443"/>
    </conflict>
</comment>
<proteinExistence type="inferred from homology"/>
<organism>
    <name type="scientific">Bacillus anthracis</name>
    <dbReference type="NCBI Taxonomy" id="1392"/>
    <lineage>
        <taxon>Bacteria</taxon>
        <taxon>Bacillati</taxon>
        <taxon>Bacillota</taxon>
        <taxon>Bacilli</taxon>
        <taxon>Bacillales</taxon>
        <taxon>Bacillaceae</taxon>
        <taxon>Bacillus</taxon>
        <taxon>Bacillus cereus group</taxon>
    </lineage>
</organism>
<keyword id="KW-1003">Cell membrane</keyword>
<keyword id="KW-0143">Chaperone</keyword>
<keyword id="KW-1015">Disulfide bond</keyword>
<keyword id="KW-0249">Electron transport</keyword>
<keyword id="KW-0472">Membrane</keyword>
<keyword id="KW-0560">Oxidoreductase</keyword>
<keyword id="KW-0614">Plasmid</keyword>
<keyword id="KW-0676">Redox-active center</keyword>
<keyword id="KW-1185">Reference proteome</keyword>
<keyword id="KW-0812">Transmembrane</keyword>
<keyword id="KW-1133">Transmembrane helix</keyword>
<keyword id="KW-0813">Transport</keyword>
<protein>
    <recommendedName>
        <fullName>Probable disulfide formation protein C 2</fullName>
    </recommendedName>
    <alternativeName>
        <fullName>Disulfide oxidoreductase C 2</fullName>
    </alternativeName>
    <alternativeName>
        <fullName>Thiol-disulfide oxidoreductase C 2</fullName>
    </alternativeName>
</protein>
<evidence type="ECO:0000250" key="1"/>
<evidence type="ECO:0000255" key="2"/>
<evidence type="ECO:0000305" key="3"/>